<name>Y048_BORBU</name>
<gene>
    <name type="ordered locus">BB_0048</name>
</gene>
<keyword id="KW-1185">Reference proteome</keyword>
<proteinExistence type="predicted"/>
<accession>O51077</accession>
<sequence>MLNKILDKLVEAYSIIFRTRVQFPPSPFILFFFLSFKHNSYSQQALLSLENLLSLF</sequence>
<protein>
    <recommendedName>
        <fullName>Uncharacterized protein BB_0048</fullName>
    </recommendedName>
</protein>
<reference key="1">
    <citation type="journal article" date="1997" name="Nature">
        <title>Genomic sequence of a Lyme disease spirochaete, Borrelia burgdorferi.</title>
        <authorList>
            <person name="Fraser C.M."/>
            <person name="Casjens S."/>
            <person name="Huang W.M."/>
            <person name="Sutton G.G."/>
            <person name="Clayton R.A."/>
            <person name="Lathigra R."/>
            <person name="White O."/>
            <person name="Ketchum K.A."/>
            <person name="Dodson R.J."/>
            <person name="Hickey E.K."/>
            <person name="Gwinn M.L."/>
            <person name="Dougherty B.A."/>
            <person name="Tomb J.-F."/>
            <person name="Fleischmann R.D."/>
            <person name="Richardson D.L."/>
            <person name="Peterson J.D."/>
            <person name="Kerlavage A.R."/>
            <person name="Quackenbush J."/>
            <person name="Salzberg S.L."/>
            <person name="Hanson M."/>
            <person name="van Vugt R."/>
            <person name="Palmer N."/>
            <person name="Adams M.D."/>
            <person name="Gocayne J.D."/>
            <person name="Weidman J.F."/>
            <person name="Utterback T.R."/>
            <person name="Watthey L."/>
            <person name="McDonald L.A."/>
            <person name="Artiach P."/>
            <person name="Bowman C."/>
            <person name="Garland S.A."/>
            <person name="Fujii C."/>
            <person name="Cotton M.D."/>
            <person name="Horst K."/>
            <person name="Roberts K.M."/>
            <person name="Hatch B."/>
            <person name="Smith H.O."/>
            <person name="Venter J.C."/>
        </authorList>
    </citation>
    <scope>NUCLEOTIDE SEQUENCE [LARGE SCALE GENOMIC DNA]</scope>
    <source>
        <strain>ATCC 35210 / DSM 4680 / CIP 102532 / B31</strain>
    </source>
</reference>
<organism>
    <name type="scientific">Borreliella burgdorferi (strain ATCC 35210 / DSM 4680 / CIP 102532 / B31)</name>
    <name type="common">Borrelia burgdorferi</name>
    <dbReference type="NCBI Taxonomy" id="224326"/>
    <lineage>
        <taxon>Bacteria</taxon>
        <taxon>Pseudomonadati</taxon>
        <taxon>Spirochaetota</taxon>
        <taxon>Spirochaetia</taxon>
        <taxon>Spirochaetales</taxon>
        <taxon>Borreliaceae</taxon>
        <taxon>Borreliella</taxon>
    </lineage>
</organism>
<dbReference type="EMBL" id="AE000783">
    <property type="protein sequence ID" value="AAC66441.1"/>
    <property type="molecule type" value="Genomic_DNA"/>
</dbReference>
<dbReference type="PIR" id="H70105">
    <property type="entry name" value="H70105"/>
</dbReference>
<dbReference type="SMR" id="O51077"/>
<dbReference type="PaxDb" id="224326-BB_0048"/>
<dbReference type="EnsemblBacteria" id="AAC66441">
    <property type="protein sequence ID" value="AAC66441"/>
    <property type="gene ID" value="BB_0048"/>
</dbReference>
<dbReference type="KEGG" id="bbu:BB_0048"/>
<dbReference type="HOGENOM" id="CLU_3005056_0_0_12"/>
<dbReference type="Proteomes" id="UP000001807">
    <property type="component" value="Chromosome"/>
</dbReference>
<feature type="chain" id="PRO_0000174375" description="Uncharacterized protein BB_0048">
    <location>
        <begin position="1"/>
        <end position="56"/>
    </location>
</feature>